<reference key="1">
    <citation type="journal article" date="2001" name="Genome Res.">
        <title>The complete genome sequence of the lactic acid bacterium Lactococcus lactis ssp. lactis IL1403.</title>
        <authorList>
            <person name="Bolotin A."/>
            <person name="Wincker P."/>
            <person name="Mauger S."/>
            <person name="Jaillon O."/>
            <person name="Malarme K."/>
            <person name="Weissenbach J."/>
            <person name="Ehrlich S.D."/>
            <person name="Sorokin A."/>
        </authorList>
    </citation>
    <scope>NUCLEOTIDE SEQUENCE [LARGE SCALE GENOMIC DNA]</scope>
    <source>
        <strain>IL1403</strain>
    </source>
</reference>
<reference key="2">
    <citation type="journal article" date="2008" name="Arch. Microbiol.">
        <title>Identification and functional characterisation of cellobiose and lactose transport systems in Lactococcus lactis IL1403.</title>
        <authorList>
            <person name="Kowalczyk M."/>
            <person name="Cocaign-Bousquet M."/>
            <person name="Loubiere P."/>
            <person name="Bardowski J."/>
        </authorList>
    </citation>
    <scope>FUNCTION</scope>
    <scope>INDUCTION</scope>
    <source>
        <strain>IL1403</strain>
    </source>
</reference>
<reference key="3">
    <citation type="journal article" date="2011" name="Int. J. Food Microbiol.">
        <title>Genetic characterization of the CcpA-dependent, cellobiose-specific PTS system comprising CelB, PtcB and PtcA that transports lactose in Lactococcus lactis IL1403.</title>
        <authorList>
            <person name="Aleksandrzak-Piekarczyk T."/>
            <person name="Polak J."/>
            <person name="Jezierska B."/>
            <person name="Renault P."/>
            <person name="Bardowski J."/>
        </authorList>
    </citation>
    <scope>FUNCTION</scope>
    <scope>INDUCTION</scope>
    <scope>DISRUPTION PHENOTYPE</scope>
    <source>
        <strain>IL1403</strain>
    </source>
</reference>
<proteinExistence type="evidence at transcript level"/>
<feature type="chain" id="PRO_0000446883" description="PTS system cellobiose-specific EIIA component">
    <location>
        <begin position="1"/>
        <end position="116"/>
    </location>
</feature>
<feature type="domain" description="PTS EIIA type-3" evidence="3">
    <location>
        <begin position="11"/>
        <end position="109"/>
    </location>
</feature>
<feature type="active site" description="Tele-phosphohistidine intermediate" evidence="1">
    <location>
        <position position="85"/>
    </location>
</feature>
<feature type="binding site" evidence="1">
    <location>
        <position position="88"/>
    </location>
    <ligand>
        <name>Mg(2+)</name>
        <dbReference type="ChEBI" id="CHEBI:18420"/>
        <note>ligand shared between all trimeric partners</note>
    </ligand>
</feature>
<feature type="modified residue" description="Phosphohistidine; by HPr" evidence="3">
    <location>
        <position position="85"/>
    </location>
</feature>
<gene>
    <name evidence="6" type="primary">ptcA</name>
    <name evidence="7" type="ordered locus">LL0414</name>
    <name evidence="8" type="ORF">L19292</name>
</gene>
<sequence>MTDKYENPTSDDYMGVVMGIIMSGGNAKGLAFQAIQQAKAGEFAEAESSLNEASEQLREAHDVQTDLLTRLAQGEKIGWNLYMVHAQDHLMNAITFKDLAVEVVGQEQRLQALENK</sequence>
<organism>
    <name type="scientific">Lactococcus lactis subsp. lactis (strain IL1403)</name>
    <name type="common">Streptococcus lactis</name>
    <dbReference type="NCBI Taxonomy" id="272623"/>
    <lineage>
        <taxon>Bacteria</taxon>
        <taxon>Bacillati</taxon>
        <taxon>Bacillota</taxon>
        <taxon>Bacilli</taxon>
        <taxon>Lactobacillales</taxon>
        <taxon>Streptococcaceae</taxon>
        <taxon>Lactococcus</taxon>
    </lineage>
</organism>
<keyword id="KW-0460">Magnesium</keyword>
<keyword id="KW-0479">Metal-binding</keyword>
<keyword id="KW-0597">Phosphoprotein</keyword>
<keyword id="KW-0598">Phosphotransferase system</keyword>
<keyword id="KW-1185">Reference proteome</keyword>
<keyword id="KW-0762">Sugar transport</keyword>
<keyword id="KW-0808">Transferase</keyword>
<keyword id="KW-0813">Transport</keyword>
<name>PTCA_LACLA</name>
<dbReference type="EMBL" id="AE005176">
    <property type="protein sequence ID" value="AAK04512.1"/>
    <property type="molecule type" value="Genomic_DNA"/>
</dbReference>
<dbReference type="PIR" id="F86676">
    <property type="entry name" value="F86676"/>
</dbReference>
<dbReference type="RefSeq" id="NP_266570.1">
    <property type="nucleotide sequence ID" value="NC_002662.1"/>
</dbReference>
<dbReference type="RefSeq" id="WP_003131552.1">
    <property type="nucleotide sequence ID" value="NC_002662.1"/>
</dbReference>
<dbReference type="SMR" id="Q9CIE9"/>
<dbReference type="TCDB" id="4.A.3.2.4">
    <property type="family name" value="the pts lactose-n,n'-diacetylchitobiose-Beta-glucoside (lac) family"/>
</dbReference>
<dbReference type="PaxDb" id="272623-L19292"/>
<dbReference type="EnsemblBacteria" id="AAK04512">
    <property type="protein sequence ID" value="AAK04512"/>
    <property type="gene ID" value="L19292"/>
</dbReference>
<dbReference type="KEGG" id="lla:L19292"/>
<dbReference type="PATRIC" id="fig|272623.7.peg.449"/>
<dbReference type="eggNOG" id="COG1447">
    <property type="taxonomic scope" value="Bacteria"/>
</dbReference>
<dbReference type="HOGENOM" id="CLU_152490_0_0_9"/>
<dbReference type="OrthoDB" id="350602at2"/>
<dbReference type="Proteomes" id="UP000002196">
    <property type="component" value="Chromosome"/>
</dbReference>
<dbReference type="GO" id="GO:0046872">
    <property type="term" value="F:metal ion binding"/>
    <property type="evidence" value="ECO:0007669"/>
    <property type="project" value="UniProtKB-KW"/>
</dbReference>
<dbReference type="GO" id="GO:0016740">
    <property type="term" value="F:transferase activity"/>
    <property type="evidence" value="ECO:0007669"/>
    <property type="project" value="UniProtKB-KW"/>
</dbReference>
<dbReference type="GO" id="GO:0009401">
    <property type="term" value="P:phosphoenolpyruvate-dependent sugar phosphotransferase system"/>
    <property type="evidence" value="ECO:0007669"/>
    <property type="project" value="UniProtKB-KW"/>
</dbReference>
<dbReference type="CDD" id="cd00215">
    <property type="entry name" value="PTS_IIA_lac"/>
    <property type="match status" value="1"/>
</dbReference>
<dbReference type="Gene3D" id="1.20.58.80">
    <property type="entry name" value="Phosphotransferase system, lactose/cellobiose-type IIA subunit"/>
    <property type="match status" value="1"/>
</dbReference>
<dbReference type="InterPro" id="IPR003188">
    <property type="entry name" value="PTS_IIA_lac/cel"/>
</dbReference>
<dbReference type="InterPro" id="IPR036542">
    <property type="entry name" value="PTS_IIA_lac/cel_sf"/>
</dbReference>
<dbReference type="PANTHER" id="PTHR34382">
    <property type="entry name" value="PTS SYSTEM N,N'-DIACETYLCHITOBIOSE-SPECIFIC EIIA COMPONENT"/>
    <property type="match status" value="1"/>
</dbReference>
<dbReference type="PANTHER" id="PTHR34382:SF7">
    <property type="entry name" value="PTS SYSTEM N,N'-DIACETYLCHITOBIOSE-SPECIFIC EIIA COMPONENT"/>
    <property type="match status" value="1"/>
</dbReference>
<dbReference type="Pfam" id="PF02255">
    <property type="entry name" value="PTS_IIA"/>
    <property type="match status" value="1"/>
</dbReference>
<dbReference type="PIRSF" id="PIRSF000699">
    <property type="entry name" value="PTS_IILac_III"/>
    <property type="match status" value="1"/>
</dbReference>
<dbReference type="SUPFAM" id="SSF46973">
    <property type="entry name" value="Enzyme IIa from lactose specific PTS, IIa-lac"/>
    <property type="match status" value="1"/>
</dbReference>
<dbReference type="PROSITE" id="PS51095">
    <property type="entry name" value="PTS_EIIA_TYPE_3"/>
    <property type="match status" value="1"/>
</dbReference>
<protein>
    <recommendedName>
        <fullName evidence="7">PTS system cellobiose-specific EIIA component</fullName>
    </recommendedName>
</protein>
<accession>Q9CIE9</accession>
<comment type="function">
    <text evidence="2 4 5">The phosphoenolpyruvate-dependent sugar phosphotransferase system (sugar PTS), a major carbohydrate active transport system, catalyzes the phosphorylation of incoming sugar substrates concomitantly with their translocation across the cell membrane (By similarity). Involved in cellobiose transport with PtcB and CelB. This system can also transport lactose (PubMed:17909747, PubMed:21262549).</text>
</comment>
<comment type="cofactor">
    <cofactor evidence="1">
        <name>Mg(2+)</name>
        <dbReference type="ChEBI" id="CHEBI:18420"/>
    </cofactor>
    <text evidence="1">Binds 1 Mg(2+) ion per trimer.</text>
</comment>
<comment type="subunit">
    <text evidence="1">Homotrimer.</text>
</comment>
<comment type="induction">
    <text evidence="4 5">Induced by growth on cellobiose. Negativelly controlled by the CcpA regulator (PubMed:17909747, PubMed:21262549). Also induced in response to galactose (PubMed:21262549).</text>
</comment>
<comment type="domain">
    <text evidence="3">The PTS EIIA type-3 domain is phosphorylated by phospho-HPr on a histidyl residue. Then, it transfers the phosphoryl group to the PTS EIIB type-3 domain.</text>
</comment>
<comment type="disruption phenotype">
    <text evidence="5">Disruption of the gene abolishes growth on cellobiose and lactose.</text>
</comment>
<evidence type="ECO:0000250" key="1">
    <source>
        <dbReference type="UniProtKB" id="P23532"/>
    </source>
</evidence>
<evidence type="ECO:0000250" key="2">
    <source>
        <dbReference type="UniProtKB" id="P69791"/>
    </source>
</evidence>
<evidence type="ECO:0000255" key="3">
    <source>
        <dbReference type="PROSITE-ProRule" id="PRU00418"/>
    </source>
</evidence>
<evidence type="ECO:0000269" key="4">
    <source>
    </source>
</evidence>
<evidence type="ECO:0000269" key="5">
    <source>
    </source>
</evidence>
<evidence type="ECO:0000303" key="6">
    <source>
    </source>
</evidence>
<evidence type="ECO:0000305" key="7"/>
<evidence type="ECO:0000312" key="8">
    <source>
        <dbReference type="EMBL" id="AAK04512.1"/>
    </source>
</evidence>